<evidence type="ECO:0000255" key="1">
    <source>
        <dbReference type="HAMAP-Rule" id="MF_01375"/>
    </source>
</evidence>
<evidence type="ECO:0000305" key="2"/>
<sequence length="264" mass="29995">MKIEAVIFDWAGTTVDYGCFAPLEVFMKIFQKRGVEITAEEARKPMGLLKIDHVRALTEMPRIADEWKRVFGQLPTEADIHEMYEEFEEILFSILPSYATPIDGVKEVIASLRERGIKIGSTTGYTREMMEIVAKEAALQGYKPDFLVTPDDVPAGRPYPWMCYKNAMELGVYPMNHMIKVGDTVSDMKEGRNAGMWTVGVILGSSELGLTQYEVESMDSVELREKIEIVRNRFAENGAHSTIETMQELENVMEHIEKQELIIS</sequence>
<accession>Q81G82</accession>
<keyword id="KW-0378">Hydrolase</keyword>
<keyword id="KW-0460">Magnesium</keyword>
<keyword id="KW-0479">Metal-binding</keyword>
<keyword id="KW-1185">Reference proteome</keyword>
<keyword id="KW-0704">Schiff base</keyword>
<comment type="function">
    <text evidence="1">Involved in phosphonate degradation.</text>
</comment>
<comment type="catalytic activity">
    <reaction evidence="1">
        <text>phosphonoacetaldehyde + H2O = acetaldehyde + phosphate + H(+)</text>
        <dbReference type="Rhea" id="RHEA:18905"/>
        <dbReference type="ChEBI" id="CHEBI:15343"/>
        <dbReference type="ChEBI" id="CHEBI:15377"/>
        <dbReference type="ChEBI" id="CHEBI:15378"/>
        <dbReference type="ChEBI" id="CHEBI:43474"/>
        <dbReference type="ChEBI" id="CHEBI:58383"/>
        <dbReference type="EC" id="3.11.1.1"/>
    </reaction>
</comment>
<comment type="cofactor">
    <cofactor evidence="1">
        <name>Mg(2+)</name>
        <dbReference type="ChEBI" id="CHEBI:18420"/>
    </cofactor>
    <text evidence="1">Binds 1 Mg(2+) ion per subunit.</text>
</comment>
<comment type="subunit">
    <text evidence="1">Homodimer.</text>
</comment>
<comment type="similarity">
    <text evidence="1">Belongs to the HAD-like hydrolase superfamily. PhnX family.</text>
</comment>
<comment type="sequence caution" evidence="2">
    <conflict type="erroneous termination">
        <sequence resource="EMBL-CDS" id="AAP08309"/>
    </conflict>
    <text>Truncated C-terminus.</text>
</comment>
<dbReference type="EC" id="3.11.1.1" evidence="1"/>
<dbReference type="EMBL" id="AE016877">
    <property type="protein sequence ID" value="AAP08309.1"/>
    <property type="status" value="ALT_SEQ"/>
    <property type="molecule type" value="Genomic_DNA"/>
</dbReference>
<dbReference type="RefSeq" id="NP_831108.1">
    <property type="nucleotide sequence ID" value="NC_004722.1"/>
</dbReference>
<dbReference type="SMR" id="Q81G82"/>
<dbReference type="STRING" id="226900.BC_1326"/>
<dbReference type="KEGG" id="bce:BC1326"/>
<dbReference type="PATRIC" id="fig|226900.8.peg.1299"/>
<dbReference type="HOGENOM" id="CLU_045011_12_0_9"/>
<dbReference type="Proteomes" id="UP000001417">
    <property type="component" value="Chromosome"/>
</dbReference>
<dbReference type="GO" id="GO:0005829">
    <property type="term" value="C:cytosol"/>
    <property type="evidence" value="ECO:0000318"/>
    <property type="project" value="GO_Central"/>
</dbReference>
<dbReference type="GO" id="GO:0000287">
    <property type="term" value="F:magnesium ion binding"/>
    <property type="evidence" value="ECO:0007669"/>
    <property type="project" value="UniProtKB-UniRule"/>
</dbReference>
<dbReference type="GO" id="GO:0008967">
    <property type="term" value="F:phosphoglycolate phosphatase activity"/>
    <property type="evidence" value="ECO:0000318"/>
    <property type="project" value="GO_Central"/>
</dbReference>
<dbReference type="GO" id="GO:0050194">
    <property type="term" value="F:phosphonoacetaldehyde hydrolase activity"/>
    <property type="evidence" value="ECO:0007669"/>
    <property type="project" value="UniProtKB-UniRule"/>
</dbReference>
<dbReference type="GO" id="GO:0006281">
    <property type="term" value="P:DNA repair"/>
    <property type="evidence" value="ECO:0000318"/>
    <property type="project" value="GO_Central"/>
</dbReference>
<dbReference type="GO" id="GO:0019700">
    <property type="term" value="P:organic phosphonate catabolic process"/>
    <property type="evidence" value="ECO:0007669"/>
    <property type="project" value="InterPro"/>
</dbReference>
<dbReference type="CDD" id="cd02586">
    <property type="entry name" value="HAD_PHN"/>
    <property type="match status" value="1"/>
</dbReference>
<dbReference type="FunFam" id="1.10.150.240:FF:000022">
    <property type="entry name" value="Phosphonoacetaldehyde hydrolase"/>
    <property type="match status" value="1"/>
</dbReference>
<dbReference type="FunFam" id="3.40.50.1000:FF:000072">
    <property type="entry name" value="Phosphonoacetaldehyde hydrolase"/>
    <property type="match status" value="1"/>
</dbReference>
<dbReference type="Gene3D" id="3.40.50.1000">
    <property type="entry name" value="HAD superfamily/HAD-like"/>
    <property type="match status" value="1"/>
</dbReference>
<dbReference type="Gene3D" id="1.10.150.240">
    <property type="entry name" value="Putative phosphatase, domain 2"/>
    <property type="match status" value="1"/>
</dbReference>
<dbReference type="HAMAP" id="MF_01375">
    <property type="entry name" value="PhnX"/>
    <property type="match status" value="1"/>
</dbReference>
<dbReference type="InterPro" id="IPR050155">
    <property type="entry name" value="HAD-like_hydrolase_sf"/>
</dbReference>
<dbReference type="InterPro" id="IPR036412">
    <property type="entry name" value="HAD-like_sf"/>
</dbReference>
<dbReference type="InterPro" id="IPR006439">
    <property type="entry name" value="HAD-SF_hydro_IA"/>
</dbReference>
<dbReference type="InterPro" id="IPR023214">
    <property type="entry name" value="HAD_sf"/>
</dbReference>
<dbReference type="InterPro" id="IPR023198">
    <property type="entry name" value="PGP-like_dom2"/>
</dbReference>
<dbReference type="InterPro" id="IPR006323">
    <property type="entry name" value="Phosphonoacetald_hydro"/>
</dbReference>
<dbReference type="NCBIfam" id="TIGR01549">
    <property type="entry name" value="HAD-SF-IA-v1"/>
    <property type="match status" value="1"/>
</dbReference>
<dbReference type="NCBIfam" id="TIGR01509">
    <property type="entry name" value="HAD-SF-IA-v3"/>
    <property type="match status" value="1"/>
</dbReference>
<dbReference type="NCBIfam" id="TIGR01422">
    <property type="entry name" value="phosphonatase"/>
    <property type="match status" value="1"/>
</dbReference>
<dbReference type="PANTHER" id="PTHR43434">
    <property type="entry name" value="PHOSPHOGLYCOLATE PHOSPHATASE"/>
    <property type="match status" value="1"/>
</dbReference>
<dbReference type="PANTHER" id="PTHR43434:SF19">
    <property type="entry name" value="PHOSPHONOACETALDEHYDE HYDROLASE"/>
    <property type="match status" value="1"/>
</dbReference>
<dbReference type="Pfam" id="PF00702">
    <property type="entry name" value="Hydrolase"/>
    <property type="match status" value="1"/>
</dbReference>
<dbReference type="SFLD" id="SFLDG01135">
    <property type="entry name" value="C1.5.6:_HAD__Beta-PGM__Phospha"/>
    <property type="match status" value="1"/>
</dbReference>
<dbReference type="SFLD" id="SFLDF00038">
    <property type="entry name" value="phosphonoacetaldehyde_hydrolas"/>
    <property type="match status" value="1"/>
</dbReference>
<dbReference type="SUPFAM" id="SSF56784">
    <property type="entry name" value="HAD-like"/>
    <property type="match status" value="1"/>
</dbReference>
<name>PHNX_BACCR</name>
<feature type="chain" id="PRO_0000284577" description="Phosphonoacetaldehyde hydrolase">
    <location>
        <begin position="1"/>
        <end position="264"/>
    </location>
</feature>
<feature type="active site" description="Nucleophile" evidence="1">
    <location>
        <position position="9"/>
    </location>
</feature>
<feature type="active site" description="Schiff-base intermediate with substrate" evidence="1">
    <location>
        <position position="50"/>
    </location>
</feature>
<feature type="binding site" evidence="1">
    <location>
        <position position="9"/>
    </location>
    <ligand>
        <name>Mg(2+)</name>
        <dbReference type="ChEBI" id="CHEBI:18420"/>
    </ligand>
</feature>
<feature type="binding site" evidence="1">
    <location>
        <position position="11"/>
    </location>
    <ligand>
        <name>Mg(2+)</name>
        <dbReference type="ChEBI" id="CHEBI:18420"/>
    </ligand>
</feature>
<feature type="binding site" evidence="1">
    <location>
        <position position="183"/>
    </location>
    <ligand>
        <name>Mg(2+)</name>
        <dbReference type="ChEBI" id="CHEBI:18420"/>
    </ligand>
</feature>
<reference key="1">
    <citation type="journal article" date="2003" name="Nature">
        <title>Genome sequence of Bacillus cereus and comparative analysis with Bacillus anthracis.</title>
        <authorList>
            <person name="Ivanova N."/>
            <person name="Sorokin A."/>
            <person name="Anderson I."/>
            <person name="Galleron N."/>
            <person name="Candelon B."/>
            <person name="Kapatral V."/>
            <person name="Bhattacharyya A."/>
            <person name="Reznik G."/>
            <person name="Mikhailova N."/>
            <person name="Lapidus A."/>
            <person name="Chu L."/>
            <person name="Mazur M."/>
            <person name="Goltsman E."/>
            <person name="Larsen N."/>
            <person name="D'Souza M."/>
            <person name="Walunas T."/>
            <person name="Grechkin Y."/>
            <person name="Pusch G."/>
            <person name="Haselkorn R."/>
            <person name="Fonstein M."/>
            <person name="Ehrlich S.D."/>
            <person name="Overbeek R."/>
            <person name="Kyrpides N.C."/>
        </authorList>
    </citation>
    <scope>NUCLEOTIDE SEQUENCE [LARGE SCALE GENOMIC DNA]</scope>
    <source>
        <strain>ATCC 14579 / DSM 31 / CCUG 7414 / JCM 2152 / NBRC 15305 / NCIMB 9373 / NCTC 2599 / NRRL B-3711</strain>
    </source>
</reference>
<proteinExistence type="inferred from homology"/>
<protein>
    <recommendedName>
        <fullName evidence="1">Phosphonoacetaldehyde hydrolase</fullName>
        <shortName evidence="1">Phosphonatase</shortName>
        <ecNumber evidence="1">3.11.1.1</ecNumber>
    </recommendedName>
    <alternativeName>
        <fullName evidence="1">Phosphonoacetaldehyde phosphonohydrolase</fullName>
    </alternativeName>
</protein>
<gene>
    <name evidence="1" type="primary">phnX</name>
    <name type="ordered locus">BC_1326</name>
</gene>
<organism>
    <name type="scientific">Bacillus cereus (strain ATCC 14579 / DSM 31 / CCUG 7414 / JCM 2152 / NBRC 15305 / NCIMB 9373 / NCTC 2599 / NRRL B-3711)</name>
    <dbReference type="NCBI Taxonomy" id="226900"/>
    <lineage>
        <taxon>Bacteria</taxon>
        <taxon>Bacillati</taxon>
        <taxon>Bacillota</taxon>
        <taxon>Bacilli</taxon>
        <taxon>Bacillales</taxon>
        <taxon>Bacillaceae</taxon>
        <taxon>Bacillus</taxon>
        <taxon>Bacillus cereus group</taxon>
    </lineage>
</organism>